<name>ACT25_DICDI</name>
<evidence type="ECO:0000250" key="1"/>
<evidence type="ECO:0000250" key="2">
    <source>
        <dbReference type="UniProtKB" id="P68137"/>
    </source>
</evidence>
<evidence type="ECO:0000305" key="3"/>
<accession>Q54HF0</accession>
<comment type="function">
    <text evidence="1">Actins are highly conserved proteins that are involved in various types of cell motility and are ubiquitously expressed in all eukaryotic cells. Multiple isoforms are involved in various cellular functions such as cytoskeleton structure, cell mobility, chromosome movement and muscle contraction (By similarity).</text>
</comment>
<comment type="catalytic activity">
    <reaction evidence="2">
        <text>ATP + H2O = ADP + phosphate + H(+)</text>
        <dbReference type="Rhea" id="RHEA:13065"/>
        <dbReference type="ChEBI" id="CHEBI:15377"/>
        <dbReference type="ChEBI" id="CHEBI:15378"/>
        <dbReference type="ChEBI" id="CHEBI:30616"/>
        <dbReference type="ChEBI" id="CHEBI:43474"/>
        <dbReference type="ChEBI" id="CHEBI:456216"/>
    </reaction>
</comment>
<comment type="subcellular location">
    <subcellularLocation>
        <location evidence="1">Cytoplasm</location>
        <location evidence="1">Cytoskeleton</location>
    </subcellularLocation>
</comment>
<comment type="similarity">
    <text evidence="3">Belongs to the actin family.</text>
</comment>
<organism>
    <name type="scientific">Dictyostelium discoideum</name>
    <name type="common">Social amoeba</name>
    <dbReference type="NCBI Taxonomy" id="44689"/>
    <lineage>
        <taxon>Eukaryota</taxon>
        <taxon>Amoebozoa</taxon>
        <taxon>Evosea</taxon>
        <taxon>Eumycetozoa</taxon>
        <taxon>Dictyostelia</taxon>
        <taxon>Dictyosteliales</taxon>
        <taxon>Dictyosteliaceae</taxon>
        <taxon>Dictyostelium</taxon>
    </lineage>
</organism>
<feature type="chain" id="PRO_0000312675" description="Putative actin-25">
    <location>
        <begin position="1"/>
        <end position="385"/>
    </location>
</feature>
<sequence>MECEEVQAIVIDNGSSVCKAGFGGDDAPRTAFPSIVGRPRCTGFIVDMDKKDSYFCKKNSCFMGQKDLYIGDEAQSKRGILNVKYPIERGIITNWNDMEEIWYHTFYNELHVAPEEHPVLLTEPPLNPKANREKMTQIMFETFKTPAIYVANQGVLSLYSTGLTTGIVMNSGDGVSHTVPVYEGYILRQAILSLDLAGRDLTDYMNELLTDRGYYFTTKGEKEIVRGIKEKLSYVALDFEAEMQIASASPALEKSYELPDGQVITIGNERFRCPEALFRPYTGIHETIYNSIMKCDDDIRKDLFGSVVLSGGSTMFPGIVDRMNKELTALAPSTMKIKIIAPPERKYSVWIGGSILASLSSFQPRWISKEEYDESGPSIVHRKCF</sequence>
<protein>
    <recommendedName>
        <fullName>Putative actin-25</fullName>
        <ecNumber evidence="2">3.6.4.-</ecNumber>
    </recommendedName>
</protein>
<reference key="1">
    <citation type="journal article" date="2005" name="Nature">
        <title>The genome of the social amoeba Dictyostelium discoideum.</title>
        <authorList>
            <person name="Eichinger L."/>
            <person name="Pachebat J.A."/>
            <person name="Gloeckner G."/>
            <person name="Rajandream M.A."/>
            <person name="Sucgang R."/>
            <person name="Berriman M."/>
            <person name="Song J."/>
            <person name="Olsen R."/>
            <person name="Szafranski K."/>
            <person name="Xu Q."/>
            <person name="Tunggal B."/>
            <person name="Kummerfeld S."/>
            <person name="Madera M."/>
            <person name="Konfortov B.A."/>
            <person name="Rivero F."/>
            <person name="Bankier A.T."/>
            <person name="Lehmann R."/>
            <person name="Hamlin N."/>
            <person name="Davies R."/>
            <person name="Gaudet P."/>
            <person name="Fey P."/>
            <person name="Pilcher K."/>
            <person name="Chen G."/>
            <person name="Saunders D."/>
            <person name="Sodergren E.J."/>
            <person name="Davis P."/>
            <person name="Kerhornou A."/>
            <person name="Nie X."/>
            <person name="Hall N."/>
            <person name="Anjard C."/>
            <person name="Hemphill L."/>
            <person name="Bason N."/>
            <person name="Farbrother P."/>
            <person name="Desany B."/>
            <person name="Just E."/>
            <person name="Morio T."/>
            <person name="Rost R."/>
            <person name="Churcher C.M."/>
            <person name="Cooper J."/>
            <person name="Haydock S."/>
            <person name="van Driessche N."/>
            <person name="Cronin A."/>
            <person name="Goodhead I."/>
            <person name="Muzny D.M."/>
            <person name="Mourier T."/>
            <person name="Pain A."/>
            <person name="Lu M."/>
            <person name="Harper D."/>
            <person name="Lindsay R."/>
            <person name="Hauser H."/>
            <person name="James K.D."/>
            <person name="Quiles M."/>
            <person name="Madan Babu M."/>
            <person name="Saito T."/>
            <person name="Buchrieser C."/>
            <person name="Wardroper A."/>
            <person name="Felder M."/>
            <person name="Thangavelu M."/>
            <person name="Johnson D."/>
            <person name="Knights A."/>
            <person name="Loulseged H."/>
            <person name="Mungall K.L."/>
            <person name="Oliver K."/>
            <person name="Price C."/>
            <person name="Quail M.A."/>
            <person name="Urushihara H."/>
            <person name="Hernandez J."/>
            <person name="Rabbinowitsch E."/>
            <person name="Steffen D."/>
            <person name="Sanders M."/>
            <person name="Ma J."/>
            <person name="Kohara Y."/>
            <person name="Sharp S."/>
            <person name="Simmonds M.N."/>
            <person name="Spiegler S."/>
            <person name="Tivey A."/>
            <person name="Sugano S."/>
            <person name="White B."/>
            <person name="Walker D."/>
            <person name="Woodward J.R."/>
            <person name="Winckler T."/>
            <person name="Tanaka Y."/>
            <person name="Shaulsky G."/>
            <person name="Schleicher M."/>
            <person name="Weinstock G.M."/>
            <person name="Rosenthal A."/>
            <person name="Cox E.C."/>
            <person name="Chisholm R.L."/>
            <person name="Gibbs R.A."/>
            <person name="Loomis W.F."/>
            <person name="Platzer M."/>
            <person name="Kay R.R."/>
            <person name="Williams J.G."/>
            <person name="Dear P.H."/>
            <person name="Noegel A.A."/>
            <person name="Barrell B.G."/>
            <person name="Kuspa A."/>
        </authorList>
    </citation>
    <scope>NUCLEOTIDE SEQUENCE [LARGE SCALE GENOMIC DNA]</scope>
    <source>
        <strain>AX4</strain>
    </source>
</reference>
<gene>
    <name type="primary">act25</name>
    <name type="ORF">DDB_G0289507</name>
</gene>
<proteinExistence type="inferred from homology"/>
<keyword id="KW-0067">ATP-binding</keyword>
<keyword id="KW-0963">Cytoplasm</keyword>
<keyword id="KW-0206">Cytoskeleton</keyword>
<keyword id="KW-0378">Hydrolase</keyword>
<keyword id="KW-0547">Nucleotide-binding</keyword>
<keyword id="KW-1185">Reference proteome</keyword>
<dbReference type="EC" id="3.6.4.-" evidence="2"/>
<dbReference type="EMBL" id="AAFI02000141">
    <property type="protein sequence ID" value="EAL62685.1"/>
    <property type="molecule type" value="Genomic_DNA"/>
</dbReference>
<dbReference type="RefSeq" id="XP_636188.1">
    <property type="nucleotide sequence ID" value="XM_631096.1"/>
</dbReference>
<dbReference type="SMR" id="Q54HF0"/>
<dbReference type="FunCoup" id="Q54HF0">
    <property type="interactions" value="8"/>
</dbReference>
<dbReference type="STRING" id="44689.Q54HF0"/>
<dbReference type="PaxDb" id="44689-DDB0220463"/>
<dbReference type="EnsemblProtists" id="EAL62685">
    <property type="protein sequence ID" value="EAL62685"/>
    <property type="gene ID" value="DDB_G0289507"/>
</dbReference>
<dbReference type="GeneID" id="8627175"/>
<dbReference type="KEGG" id="ddi:DDB_G0289507"/>
<dbReference type="dictyBase" id="DDB_G0289507">
    <property type="gene designation" value="act25"/>
</dbReference>
<dbReference type="VEuPathDB" id="AmoebaDB:DDB_G0289507"/>
<dbReference type="eggNOG" id="KOG0676">
    <property type="taxonomic scope" value="Eukaryota"/>
</dbReference>
<dbReference type="HOGENOM" id="CLU_027965_0_2_1"/>
<dbReference type="InParanoid" id="Q54HF0"/>
<dbReference type="PhylomeDB" id="Q54HF0"/>
<dbReference type="PRO" id="PR:Q54HF0"/>
<dbReference type="Proteomes" id="UP000002195">
    <property type="component" value="Chromosome 5"/>
</dbReference>
<dbReference type="GO" id="GO:0015629">
    <property type="term" value="C:actin cytoskeleton"/>
    <property type="evidence" value="ECO:0000250"/>
    <property type="project" value="dictyBase"/>
</dbReference>
<dbReference type="GO" id="GO:0005737">
    <property type="term" value="C:cytoplasm"/>
    <property type="evidence" value="ECO:0007669"/>
    <property type="project" value="UniProtKB-KW"/>
</dbReference>
<dbReference type="GO" id="GO:0005524">
    <property type="term" value="F:ATP binding"/>
    <property type="evidence" value="ECO:0007669"/>
    <property type="project" value="UniProtKB-KW"/>
</dbReference>
<dbReference type="GO" id="GO:0016787">
    <property type="term" value="F:hydrolase activity"/>
    <property type="evidence" value="ECO:0007669"/>
    <property type="project" value="UniProtKB-KW"/>
</dbReference>
<dbReference type="GO" id="GO:0017022">
    <property type="term" value="F:myosin binding"/>
    <property type="evidence" value="ECO:0000250"/>
    <property type="project" value="dictyBase"/>
</dbReference>
<dbReference type="GO" id="GO:0005200">
    <property type="term" value="F:structural constituent of cytoskeleton"/>
    <property type="evidence" value="ECO:0000250"/>
    <property type="project" value="dictyBase"/>
</dbReference>
<dbReference type="GO" id="GO:0006909">
    <property type="term" value="P:phagocytosis"/>
    <property type="evidence" value="ECO:0000250"/>
    <property type="project" value="dictyBase"/>
</dbReference>
<dbReference type="FunFam" id="3.30.420.40:FF:000148">
    <property type="entry name" value="Actin, alpha skeletal muscle"/>
    <property type="match status" value="1"/>
</dbReference>
<dbReference type="FunFam" id="3.90.640.10:FF:000047">
    <property type="entry name" value="Actin, alpha skeletal muscle"/>
    <property type="match status" value="1"/>
</dbReference>
<dbReference type="FunFam" id="3.30.420.40:FF:000404">
    <property type="entry name" value="Major actin"/>
    <property type="match status" value="1"/>
</dbReference>
<dbReference type="Gene3D" id="3.30.420.40">
    <property type="match status" value="2"/>
</dbReference>
<dbReference type="Gene3D" id="3.90.640.10">
    <property type="entry name" value="Actin, Chain A, domain 4"/>
    <property type="match status" value="1"/>
</dbReference>
<dbReference type="InterPro" id="IPR004000">
    <property type="entry name" value="Actin"/>
</dbReference>
<dbReference type="InterPro" id="IPR020902">
    <property type="entry name" value="Actin/actin-like_CS"/>
</dbReference>
<dbReference type="InterPro" id="IPR004001">
    <property type="entry name" value="Actin_CS"/>
</dbReference>
<dbReference type="InterPro" id="IPR043129">
    <property type="entry name" value="ATPase_NBD"/>
</dbReference>
<dbReference type="PANTHER" id="PTHR11937">
    <property type="entry name" value="ACTIN"/>
    <property type="match status" value="1"/>
</dbReference>
<dbReference type="Pfam" id="PF00022">
    <property type="entry name" value="Actin"/>
    <property type="match status" value="1"/>
</dbReference>
<dbReference type="PRINTS" id="PR00190">
    <property type="entry name" value="ACTIN"/>
</dbReference>
<dbReference type="SMART" id="SM00268">
    <property type="entry name" value="ACTIN"/>
    <property type="match status" value="1"/>
</dbReference>
<dbReference type="SUPFAM" id="SSF53067">
    <property type="entry name" value="Actin-like ATPase domain"/>
    <property type="match status" value="2"/>
</dbReference>
<dbReference type="PROSITE" id="PS00406">
    <property type="entry name" value="ACTINS_1"/>
    <property type="match status" value="1"/>
</dbReference>
<dbReference type="PROSITE" id="PS00432">
    <property type="entry name" value="ACTINS_2"/>
    <property type="match status" value="1"/>
</dbReference>
<dbReference type="PROSITE" id="PS01132">
    <property type="entry name" value="ACTINS_ACT_LIKE"/>
    <property type="match status" value="1"/>
</dbReference>